<sequence length="320" mass="35778">MVSRTERKQHKKRRKWPFWLGGILLVLLLLISGGIFLIYNQVGAVVDTMHSPLSRDSDPDRQKEINQLYKEKDAVNILLLGVDERDGDLGRSDTMILLSINPNTDKMIMLSIPRDTYVNIPGRGMDKINHAYPFGIVDGVGGPDLSVQTVEETFNLSIHSYIRVNMEGFQQGIDAVGGVTVNNAQAFSTGGYNFDQGQITLDGKQALEFIRMRKQDSRGDLGRNDRQRQVIQAAMNEAASFSSITKAGEILDILGNNVQTDLDMDKLQTLLTNYAGARNNITTMEIEGHGETINGIWYYIVSDEEINRVNSEITGHMQEQ</sequence>
<accession>Q8ENF3</accession>
<protein>
    <recommendedName>
        <fullName evidence="1">Polyisoprenyl-teichoic acid--peptidoglycan teichoic acid transferase TagU</fullName>
        <ecNumber evidence="1">2.7.8.-</ecNumber>
    </recommendedName>
</protein>
<evidence type="ECO:0000255" key="1">
    <source>
        <dbReference type="HAMAP-Rule" id="MF_01140"/>
    </source>
</evidence>
<reference key="1">
    <citation type="journal article" date="2002" name="Nucleic Acids Res.">
        <title>Genome sequence of Oceanobacillus iheyensis isolated from the Iheya Ridge and its unexpected adaptive capabilities to extreme environments.</title>
        <authorList>
            <person name="Takami H."/>
            <person name="Takaki Y."/>
            <person name="Uchiyama I."/>
        </authorList>
    </citation>
    <scope>NUCLEOTIDE SEQUENCE [LARGE SCALE GENOMIC DNA]</scope>
    <source>
        <strain>DSM 14371 / CIP 107618 / JCM 11309 / KCTC 3954 / HTE831</strain>
    </source>
</reference>
<name>TAGU_OCEIH</name>
<organism>
    <name type="scientific">Oceanobacillus iheyensis (strain DSM 14371 / CIP 107618 / JCM 11309 / KCTC 3954 / HTE831)</name>
    <dbReference type="NCBI Taxonomy" id="221109"/>
    <lineage>
        <taxon>Bacteria</taxon>
        <taxon>Bacillati</taxon>
        <taxon>Bacillota</taxon>
        <taxon>Bacilli</taxon>
        <taxon>Bacillales</taxon>
        <taxon>Bacillaceae</taxon>
        <taxon>Oceanobacillus</taxon>
    </lineage>
</organism>
<proteinExistence type="inferred from homology"/>
<dbReference type="EC" id="2.7.8.-" evidence="1"/>
<dbReference type="EMBL" id="BA000028">
    <property type="protein sequence ID" value="BAC14486.1"/>
    <property type="molecule type" value="Genomic_DNA"/>
</dbReference>
<dbReference type="RefSeq" id="WP_011066923.1">
    <property type="nucleotide sequence ID" value="NC_004193.1"/>
</dbReference>
<dbReference type="SMR" id="Q8ENF3"/>
<dbReference type="STRING" id="221109.gene:10734782"/>
<dbReference type="KEGG" id="oih:OB2530"/>
<dbReference type="eggNOG" id="COG1316">
    <property type="taxonomic scope" value="Bacteria"/>
</dbReference>
<dbReference type="HOGENOM" id="CLU_016455_2_2_9"/>
<dbReference type="OrthoDB" id="27330at2"/>
<dbReference type="PhylomeDB" id="Q8ENF3"/>
<dbReference type="Proteomes" id="UP000000822">
    <property type="component" value="Chromosome"/>
</dbReference>
<dbReference type="GO" id="GO:0005886">
    <property type="term" value="C:plasma membrane"/>
    <property type="evidence" value="ECO:0007669"/>
    <property type="project" value="UniProtKB-SubCell"/>
</dbReference>
<dbReference type="GO" id="GO:0016780">
    <property type="term" value="F:phosphotransferase activity, for other substituted phosphate groups"/>
    <property type="evidence" value="ECO:0007669"/>
    <property type="project" value="UniProtKB-UniRule"/>
</dbReference>
<dbReference type="GO" id="GO:0070726">
    <property type="term" value="P:cell wall assembly"/>
    <property type="evidence" value="ECO:0007669"/>
    <property type="project" value="UniProtKB-UniRule"/>
</dbReference>
<dbReference type="Gene3D" id="3.40.630.190">
    <property type="entry name" value="LCP protein"/>
    <property type="match status" value="1"/>
</dbReference>
<dbReference type="HAMAP" id="MF_01140">
    <property type="entry name" value="TagU_transferase"/>
    <property type="match status" value="1"/>
</dbReference>
<dbReference type="InterPro" id="IPR050922">
    <property type="entry name" value="LytR/CpsA/Psr_CW_biosynth"/>
</dbReference>
<dbReference type="InterPro" id="IPR004474">
    <property type="entry name" value="LytR_CpsA_psr"/>
</dbReference>
<dbReference type="InterPro" id="IPR023734">
    <property type="entry name" value="TagU"/>
</dbReference>
<dbReference type="NCBIfam" id="TIGR00350">
    <property type="entry name" value="lytR_cpsA_psr"/>
    <property type="match status" value="1"/>
</dbReference>
<dbReference type="PANTHER" id="PTHR33392">
    <property type="entry name" value="POLYISOPRENYL-TEICHOIC ACID--PEPTIDOGLYCAN TEICHOIC ACID TRANSFERASE TAGU"/>
    <property type="match status" value="1"/>
</dbReference>
<dbReference type="PANTHER" id="PTHR33392:SF6">
    <property type="entry name" value="POLYISOPRENYL-TEICHOIC ACID--PEPTIDOGLYCAN TEICHOIC ACID TRANSFERASE TAGU"/>
    <property type="match status" value="1"/>
</dbReference>
<dbReference type="Pfam" id="PF03816">
    <property type="entry name" value="LytR_cpsA_psr"/>
    <property type="match status" value="1"/>
</dbReference>
<gene>
    <name evidence="1" type="primary">tagU</name>
    <name type="ordered locus">OB2530</name>
</gene>
<keyword id="KW-1003">Cell membrane</keyword>
<keyword id="KW-0961">Cell wall biogenesis/degradation</keyword>
<keyword id="KW-0472">Membrane</keyword>
<keyword id="KW-1185">Reference proteome</keyword>
<keyword id="KW-0735">Signal-anchor</keyword>
<keyword id="KW-0808">Transferase</keyword>
<keyword id="KW-0812">Transmembrane</keyword>
<keyword id="KW-1133">Transmembrane helix</keyword>
<feature type="chain" id="PRO_0000218500" description="Polyisoprenyl-teichoic acid--peptidoglycan teichoic acid transferase TagU">
    <location>
        <begin position="1"/>
        <end position="320"/>
    </location>
</feature>
<feature type="topological domain" description="Cytoplasmic" evidence="1">
    <location>
        <begin position="1"/>
        <end position="15"/>
    </location>
</feature>
<feature type="transmembrane region" description="Helical; Signal-anchor for type II membrane protein" evidence="1">
    <location>
        <begin position="16"/>
        <end position="36"/>
    </location>
</feature>
<feature type="topological domain" description="Extracellular" evidence="1">
    <location>
        <begin position="37"/>
        <end position="320"/>
    </location>
</feature>
<comment type="function">
    <text evidence="1">May catalyze the final step in cell wall teichoic acid biosynthesis, the transfer of the anionic cell wall polymers (APs) from their lipid-linked precursor to the cell wall peptidoglycan (PG).</text>
</comment>
<comment type="pathway">
    <text evidence="1">Cell wall biogenesis.</text>
</comment>
<comment type="subcellular location">
    <subcellularLocation>
        <location evidence="1">Cell membrane</location>
        <topology evidence="1">Single-pass type II membrane protein</topology>
    </subcellularLocation>
</comment>
<comment type="similarity">
    <text evidence="1">Belongs to the LytR/CpsA/Psr (LCP) family.</text>
</comment>